<comment type="function">
    <text evidence="1">Catalyzes the conversion of dihydroorotate to orotate with quinone as electron acceptor.</text>
</comment>
<comment type="catalytic activity">
    <reaction evidence="1">
        <text>(S)-dihydroorotate + a quinone = orotate + a quinol</text>
        <dbReference type="Rhea" id="RHEA:30187"/>
        <dbReference type="ChEBI" id="CHEBI:24646"/>
        <dbReference type="ChEBI" id="CHEBI:30839"/>
        <dbReference type="ChEBI" id="CHEBI:30864"/>
        <dbReference type="ChEBI" id="CHEBI:132124"/>
        <dbReference type="EC" id="1.3.5.2"/>
    </reaction>
</comment>
<comment type="cofactor">
    <cofactor evidence="1">
        <name>FMN</name>
        <dbReference type="ChEBI" id="CHEBI:58210"/>
    </cofactor>
    <text evidence="1">Binds 1 FMN per subunit.</text>
</comment>
<comment type="pathway">
    <text evidence="1">Pyrimidine metabolism; UMP biosynthesis via de novo pathway; orotate from (S)-dihydroorotate (quinone route): step 1/1.</text>
</comment>
<comment type="subunit">
    <text evidence="1">Monomer.</text>
</comment>
<comment type="subcellular location">
    <subcellularLocation>
        <location evidence="1">Cell membrane</location>
        <topology evidence="1">Peripheral membrane protein</topology>
    </subcellularLocation>
</comment>
<comment type="similarity">
    <text evidence="1">Belongs to the dihydroorotate dehydrogenase family. Type 2 subfamily.</text>
</comment>
<proteinExistence type="inferred from homology"/>
<accession>A1TPZ2</accession>
<organism>
    <name type="scientific">Paracidovorax citrulli (strain AAC00-1)</name>
    <name type="common">Acidovorax citrulli</name>
    <dbReference type="NCBI Taxonomy" id="397945"/>
    <lineage>
        <taxon>Bacteria</taxon>
        <taxon>Pseudomonadati</taxon>
        <taxon>Pseudomonadota</taxon>
        <taxon>Betaproteobacteria</taxon>
        <taxon>Burkholderiales</taxon>
        <taxon>Comamonadaceae</taxon>
        <taxon>Paracidovorax</taxon>
    </lineage>
</organism>
<sequence length="359" mass="38731">MSLIPYALTRPFLFGMDAEAAHELTMDMLARGQRTPLQWAWSGEQVSDPVQLAGLTFPNRVGMAAGLDKNARCIDALGAMGFGFVEVGTVTPRAQPGNPKPRMFRLPEANALINRLGFNNEGLDAFLHNVRQSNHHARPGMRPMLLGLNIGKNATTPIEDATRDYLLCLEGVYPHADYVTVNISSPNTQNLRALQSDAALDGLLGAIAERRESLARQPEKATGRPRRVPIFVKIAPDLAEEQVAVIASTLQRHGMDGVIATNTTISRDAVQGLRHAEETGGLSGAPVREASNRVIRQLRHALGKDFPIIGVGGILSAEDAVEKIRAGADVVQIYTGLIYRGPALVPQVAKALRAMPRPA</sequence>
<gene>
    <name evidence="1" type="primary">pyrD</name>
    <name type="ordered locus">Aave_2455</name>
</gene>
<keyword id="KW-1003">Cell membrane</keyword>
<keyword id="KW-0285">Flavoprotein</keyword>
<keyword id="KW-0288">FMN</keyword>
<keyword id="KW-0472">Membrane</keyword>
<keyword id="KW-0560">Oxidoreductase</keyword>
<keyword id="KW-0665">Pyrimidine biosynthesis</keyword>
<name>PYRD_PARC0</name>
<feature type="chain" id="PRO_1000024144" description="Dihydroorotate dehydrogenase (quinone)">
    <location>
        <begin position="1"/>
        <end position="359"/>
    </location>
</feature>
<feature type="active site" description="Nucleophile" evidence="1">
    <location>
        <position position="185"/>
    </location>
</feature>
<feature type="binding site" evidence="1">
    <location>
        <begin position="65"/>
        <end position="69"/>
    </location>
    <ligand>
        <name>FMN</name>
        <dbReference type="ChEBI" id="CHEBI:58210"/>
    </ligand>
</feature>
<feature type="binding site" evidence="1">
    <location>
        <position position="69"/>
    </location>
    <ligand>
        <name>substrate</name>
    </ligand>
</feature>
<feature type="binding site" evidence="1">
    <location>
        <position position="89"/>
    </location>
    <ligand>
        <name>FMN</name>
        <dbReference type="ChEBI" id="CHEBI:58210"/>
    </ligand>
</feature>
<feature type="binding site" evidence="1">
    <location>
        <begin position="114"/>
        <end position="118"/>
    </location>
    <ligand>
        <name>substrate</name>
    </ligand>
</feature>
<feature type="binding site" evidence="1">
    <location>
        <position position="149"/>
    </location>
    <ligand>
        <name>FMN</name>
        <dbReference type="ChEBI" id="CHEBI:58210"/>
    </ligand>
</feature>
<feature type="binding site" evidence="1">
    <location>
        <position position="182"/>
    </location>
    <ligand>
        <name>FMN</name>
        <dbReference type="ChEBI" id="CHEBI:58210"/>
    </ligand>
</feature>
<feature type="binding site" evidence="1">
    <location>
        <position position="182"/>
    </location>
    <ligand>
        <name>substrate</name>
    </ligand>
</feature>
<feature type="binding site" evidence="1">
    <location>
        <position position="187"/>
    </location>
    <ligand>
        <name>substrate</name>
    </ligand>
</feature>
<feature type="binding site" evidence="1">
    <location>
        <position position="233"/>
    </location>
    <ligand>
        <name>FMN</name>
        <dbReference type="ChEBI" id="CHEBI:58210"/>
    </ligand>
</feature>
<feature type="binding site" evidence="1">
    <location>
        <position position="261"/>
    </location>
    <ligand>
        <name>FMN</name>
        <dbReference type="ChEBI" id="CHEBI:58210"/>
    </ligand>
</feature>
<feature type="binding site" evidence="1">
    <location>
        <begin position="262"/>
        <end position="263"/>
    </location>
    <ligand>
        <name>substrate</name>
    </ligand>
</feature>
<feature type="binding site" evidence="1">
    <location>
        <position position="284"/>
    </location>
    <ligand>
        <name>FMN</name>
        <dbReference type="ChEBI" id="CHEBI:58210"/>
    </ligand>
</feature>
<feature type="binding site" evidence="1">
    <location>
        <position position="313"/>
    </location>
    <ligand>
        <name>FMN</name>
        <dbReference type="ChEBI" id="CHEBI:58210"/>
    </ligand>
</feature>
<feature type="binding site" evidence="1">
    <location>
        <begin position="334"/>
        <end position="335"/>
    </location>
    <ligand>
        <name>FMN</name>
        <dbReference type="ChEBI" id="CHEBI:58210"/>
    </ligand>
</feature>
<reference key="1">
    <citation type="submission" date="2006-12" db="EMBL/GenBank/DDBJ databases">
        <title>Complete sequence of Acidovorax avenae subsp. citrulli AAC00-1.</title>
        <authorList>
            <person name="Copeland A."/>
            <person name="Lucas S."/>
            <person name="Lapidus A."/>
            <person name="Barry K."/>
            <person name="Detter J.C."/>
            <person name="Glavina del Rio T."/>
            <person name="Dalin E."/>
            <person name="Tice H."/>
            <person name="Pitluck S."/>
            <person name="Kiss H."/>
            <person name="Brettin T."/>
            <person name="Bruce D."/>
            <person name="Han C."/>
            <person name="Tapia R."/>
            <person name="Gilna P."/>
            <person name="Schmutz J."/>
            <person name="Larimer F."/>
            <person name="Land M."/>
            <person name="Hauser L."/>
            <person name="Kyrpides N."/>
            <person name="Kim E."/>
            <person name="Stahl D."/>
            <person name="Richardson P."/>
        </authorList>
    </citation>
    <scope>NUCLEOTIDE SEQUENCE [LARGE SCALE GENOMIC DNA]</scope>
    <source>
        <strain>AAC00-1</strain>
    </source>
</reference>
<evidence type="ECO:0000255" key="1">
    <source>
        <dbReference type="HAMAP-Rule" id="MF_00225"/>
    </source>
</evidence>
<dbReference type="EC" id="1.3.5.2" evidence="1"/>
<dbReference type="EMBL" id="CP000512">
    <property type="protein sequence ID" value="ABM33030.1"/>
    <property type="molecule type" value="Genomic_DNA"/>
</dbReference>
<dbReference type="RefSeq" id="WP_011795559.1">
    <property type="nucleotide sequence ID" value="NC_008752.1"/>
</dbReference>
<dbReference type="SMR" id="A1TPZ2"/>
<dbReference type="STRING" id="397945.Aave_2455"/>
<dbReference type="GeneID" id="79792030"/>
<dbReference type="KEGG" id="aav:Aave_2455"/>
<dbReference type="eggNOG" id="COG0167">
    <property type="taxonomic scope" value="Bacteria"/>
</dbReference>
<dbReference type="HOGENOM" id="CLU_013640_2_0_4"/>
<dbReference type="OrthoDB" id="9802377at2"/>
<dbReference type="UniPathway" id="UPA00070">
    <property type="reaction ID" value="UER00946"/>
</dbReference>
<dbReference type="Proteomes" id="UP000002596">
    <property type="component" value="Chromosome"/>
</dbReference>
<dbReference type="GO" id="GO:0005737">
    <property type="term" value="C:cytoplasm"/>
    <property type="evidence" value="ECO:0007669"/>
    <property type="project" value="InterPro"/>
</dbReference>
<dbReference type="GO" id="GO:0005886">
    <property type="term" value="C:plasma membrane"/>
    <property type="evidence" value="ECO:0007669"/>
    <property type="project" value="UniProtKB-SubCell"/>
</dbReference>
<dbReference type="GO" id="GO:0106430">
    <property type="term" value="F:dihydroorotate dehydrogenase (quinone) activity"/>
    <property type="evidence" value="ECO:0007669"/>
    <property type="project" value="UniProtKB-EC"/>
</dbReference>
<dbReference type="GO" id="GO:0006207">
    <property type="term" value="P:'de novo' pyrimidine nucleobase biosynthetic process"/>
    <property type="evidence" value="ECO:0007669"/>
    <property type="project" value="InterPro"/>
</dbReference>
<dbReference type="GO" id="GO:0044205">
    <property type="term" value="P:'de novo' UMP biosynthetic process"/>
    <property type="evidence" value="ECO:0007669"/>
    <property type="project" value="UniProtKB-UniRule"/>
</dbReference>
<dbReference type="CDD" id="cd04738">
    <property type="entry name" value="DHOD_2_like"/>
    <property type="match status" value="1"/>
</dbReference>
<dbReference type="Gene3D" id="3.20.20.70">
    <property type="entry name" value="Aldolase class I"/>
    <property type="match status" value="1"/>
</dbReference>
<dbReference type="HAMAP" id="MF_00225">
    <property type="entry name" value="DHO_dh_type2"/>
    <property type="match status" value="1"/>
</dbReference>
<dbReference type="InterPro" id="IPR013785">
    <property type="entry name" value="Aldolase_TIM"/>
</dbReference>
<dbReference type="InterPro" id="IPR050074">
    <property type="entry name" value="DHO_dehydrogenase"/>
</dbReference>
<dbReference type="InterPro" id="IPR005719">
    <property type="entry name" value="Dihydroorotate_DH_2"/>
</dbReference>
<dbReference type="InterPro" id="IPR005720">
    <property type="entry name" value="Dihydroorotate_DH_cat"/>
</dbReference>
<dbReference type="InterPro" id="IPR001295">
    <property type="entry name" value="Dihydroorotate_DH_CS"/>
</dbReference>
<dbReference type="NCBIfam" id="NF003644">
    <property type="entry name" value="PRK05286.1-1"/>
    <property type="match status" value="1"/>
</dbReference>
<dbReference type="NCBIfam" id="NF003645">
    <property type="entry name" value="PRK05286.1-2"/>
    <property type="match status" value="1"/>
</dbReference>
<dbReference type="NCBIfam" id="NF003646">
    <property type="entry name" value="PRK05286.1-4"/>
    <property type="match status" value="1"/>
</dbReference>
<dbReference type="NCBIfam" id="NF003652">
    <property type="entry name" value="PRK05286.2-5"/>
    <property type="match status" value="1"/>
</dbReference>
<dbReference type="NCBIfam" id="TIGR01036">
    <property type="entry name" value="pyrD_sub2"/>
    <property type="match status" value="1"/>
</dbReference>
<dbReference type="PANTHER" id="PTHR48109:SF4">
    <property type="entry name" value="DIHYDROOROTATE DEHYDROGENASE (QUINONE), MITOCHONDRIAL"/>
    <property type="match status" value="1"/>
</dbReference>
<dbReference type="PANTHER" id="PTHR48109">
    <property type="entry name" value="DIHYDROOROTATE DEHYDROGENASE (QUINONE), MITOCHONDRIAL-RELATED"/>
    <property type="match status" value="1"/>
</dbReference>
<dbReference type="Pfam" id="PF01180">
    <property type="entry name" value="DHO_dh"/>
    <property type="match status" value="1"/>
</dbReference>
<dbReference type="SUPFAM" id="SSF51395">
    <property type="entry name" value="FMN-linked oxidoreductases"/>
    <property type="match status" value="1"/>
</dbReference>
<dbReference type="PROSITE" id="PS00911">
    <property type="entry name" value="DHODEHASE_1"/>
    <property type="match status" value="1"/>
</dbReference>
<dbReference type="PROSITE" id="PS00912">
    <property type="entry name" value="DHODEHASE_2"/>
    <property type="match status" value="1"/>
</dbReference>
<protein>
    <recommendedName>
        <fullName evidence="1">Dihydroorotate dehydrogenase (quinone)</fullName>
        <ecNumber evidence="1">1.3.5.2</ecNumber>
    </recommendedName>
    <alternativeName>
        <fullName evidence="1">DHOdehase</fullName>
        <shortName evidence="1">DHOD</shortName>
        <shortName evidence="1">DHODase</shortName>
    </alternativeName>
    <alternativeName>
        <fullName evidence="1">Dihydroorotate oxidase</fullName>
    </alternativeName>
</protein>